<proteinExistence type="inferred from homology"/>
<accession>P0C2T5</accession>
<accession>O52362</accession>
<accession>Q48603</accession>
<dbReference type="EC" id="3.2.1.17"/>
<dbReference type="EMBL" id="AF036720">
    <property type="protein sequence ID" value="AAB93629.1"/>
    <property type="molecule type" value="Genomic_DNA"/>
</dbReference>
<dbReference type="RefSeq" id="WP_282674947.1">
    <property type="nucleotide sequence ID" value="NZ_JARUVZ010000082.1"/>
</dbReference>
<dbReference type="SMR" id="P0C2T5"/>
<dbReference type="GO" id="GO:0005576">
    <property type="term" value="C:extracellular region"/>
    <property type="evidence" value="ECO:0007669"/>
    <property type="project" value="UniProtKB-SubCell"/>
</dbReference>
<dbReference type="GO" id="GO:0004040">
    <property type="term" value="F:amidase activity"/>
    <property type="evidence" value="ECO:0007669"/>
    <property type="project" value="InterPro"/>
</dbReference>
<dbReference type="GO" id="GO:0003796">
    <property type="term" value="F:lysozyme activity"/>
    <property type="evidence" value="ECO:0007669"/>
    <property type="project" value="UniProtKB-EC"/>
</dbReference>
<dbReference type="GO" id="GO:0071555">
    <property type="term" value="P:cell wall organization"/>
    <property type="evidence" value="ECO:0007669"/>
    <property type="project" value="UniProtKB-KW"/>
</dbReference>
<dbReference type="GO" id="GO:0042742">
    <property type="term" value="P:defense response to bacterium"/>
    <property type="evidence" value="ECO:0007669"/>
    <property type="project" value="UniProtKB-KW"/>
</dbReference>
<dbReference type="GO" id="GO:0000917">
    <property type="term" value="P:division septum assembly"/>
    <property type="evidence" value="ECO:0007669"/>
    <property type="project" value="UniProtKB-KW"/>
</dbReference>
<dbReference type="GO" id="GO:0031640">
    <property type="term" value="P:killing of cells of another organism"/>
    <property type="evidence" value="ECO:0007669"/>
    <property type="project" value="UniProtKB-KW"/>
</dbReference>
<dbReference type="CDD" id="cd00118">
    <property type="entry name" value="LysM"/>
    <property type="match status" value="3"/>
</dbReference>
<dbReference type="Gene3D" id="1.10.530.10">
    <property type="match status" value="1"/>
</dbReference>
<dbReference type="Gene3D" id="4.10.80.30">
    <property type="entry name" value="DNA polymerase, domain 6"/>
    <property type="match status" value="1"/>
</dbReference>
<dbReference type="Gene3D" id="3.10.350.10">
    <property type="entry name" value="LysM domain"/>
    <property type="match status" value="3"/>
</dbReference>
<dbReference type="InterPro" id="IPR051056">
    <property type="entry name" value="Glycosyl_Hydrolase_73"/>
</dbReference>
<dbReference type="InterPro" id="IPR018392">
    <property type="entry name" value="LysM_dom"/>
</dbReference>
<dbReference type="InterPro" id="IPR036779">
    <property type="entry name" value="LysM_dom_sf"/>
</dbReference>
<dbReference type="InterPro" id="IPR002901">
    <property type="entry name" value="MGlyc_endo_b_GlcNAc-like_dom"/>
</dbReference>
<dbReference type="PANTHER" id="PTHR33308">
    <property type="entry name" value="PEPTIDOGLYCAN HYDROLASE FLGJ"/>
    <property type="match status" value="1"/>
</dbReference>
<dbReference type="PANTHER" id="PTHR33308:SF9">
    <property type="entry name" value="PEPTIDOGLYCAN HYDROLASE FLGJ"/>
    <property type="match status" value="1"/>
</dbReference>
<dbReference type="Pfam" id="PF01832">
    <property type="entry name" value="Glucosaminidase"/>
    <property type="match status" value="1"/>
</dbReference>
<dbReference type="Pfam" id="PF01476">
    <property type="entry name" value="LysM"/>
    <property type="match status" value="3"/>
</dbReference>
<dbReference type="SMART" id="SM00257">
    <property type="entry name" value="LysM"/>
    <property type="match status" value="3"/>
</dbReference>
<dbReference type="SMART" id="SM00047">
    <property type="entry name" value="LYZ2"/>
    <property type="match status" value="1"/>
</dbReference>
<dbReference type="SUPFAM" id="SSF54106">
    <property type="entry name" value="LysM domain"/>
    <property type="match status" value="3"/>
</dbReference>
<dbReference type="PROSITE" id="PS51782">
    <property type="entry name" value="LYSM"/>
    <property type="match status" value="3"/>
</dbReference>
<protein>
    <recommendedName>
        <fullName>Probable N-acetylmuramidase</fullName>
        <ecNumber>3.2.1.17</ecNumber>
    </recommendedName>
    <alternativeName>
        <fullName>Autolysin</fullName>
    </alternativeName>
    <alternativeName>
        <fullName>Lysozyme</fullName>
    </alternativeName>
    <alternativeName>
        <fullName>Peptidoglycan hydrolase</fullName>
    </alternativeName>
</protein>
<sequence length="437" mass="46597">MPVSRVKVKNRHLKKKTKKPLAFYKPTTKFVGAVLIAGTLTTTHELLLQQTSPMVQAATNSSEAFIESIAASAKPVADANGLYPSVMIAQAILESNWGSSQLSRAPYYNLFGIQGTYQGKSVVFKTQEYLNGKWVTKDMPFRVYPSFNQSFQDNTYVLKTTNFGNGPYYAKAWRANAATYQDATAALTGKYATDPSYGASLNRIISQYNLTRFDGASSAGNTNSGGSTTTNTNNNSGTNSSSTTYTVKSGDTLWGISQRYGISVAQIQSANNLKSTIIYIGQKLLLTGSASSTNSGGSNNSASTTPTTSVTPAKPASQTSVKVKSGDTLWALSVKYKTSIAQLKSWNHLSSDTIYIGQNLIVSQSAATSNPSTGSGSTATNNSNSTSSNSNASIHKVVKGDTLWGLSQKSGSPIASIKAWNHLSSDTILIGQYLRIK</sequence>
<reference key="1">
    <citation type="journal article" date="2000" name="J. Dairy Res.">
        <title>Varying influence of the autolysin, N-acetyl muramidase, and the cell envelope proteinase on the rate of autolysis of six commercial Lactococcus lactis cheese starter bacteria grown in milk.</title>
        <authorList>
            <person name="Govindasamy-Lucey S."/>
            <person name="Gopal P.K."/>
            <person name="Sullivan P.A."/>
            <person name="Pillidge C.J."/>
        </authorList>
    </citation>
    <scope>NUCLEOTIDE SEQUENCE [GENOMIC DNA]</scope>
    <source>
        <strain>2250</strain>
    </source>
</reference>
<name>ACMA_LACLC</name>
<gene>
    <name type="primary">acmA</name>
</gene>
<feature type="signal peptide" evidence="2">
    <location>
        <begin position="1"/>
        <end position="57"/>
    </location>
</feature>
<feature type="chain" id="PRO_0000012113" description="Probable N-acetylmuramidase">
    <location>
        <begin position="58"/>
        <end position="437"/>
    </location>
</feature>
<feature type="domain" description="LysM 1" evidence="3">
    <location>
        <begin position="243"/>
        <end position="286"/>
    </location>
</feature>
<feature type="domain" description="LysM 2" evidence="3">
    <location>
        <begin position="319"/>
        <end position="362"/>
    </location>
</feature>
<feature type="domain" description="LysM 3" evidence="3">
    <location>
        <begin position="393"/>
        <end position="436"/>
    </location>
</feature>
<feature type="region of interest" description="Disordered" evidence="4">
    <location>
        <begin position="217"/>
        <end position="244"/>
    </location>
</feature>
<feature type="region of interest" description="Disordered" evidence="4">
    <location>
        <begin position="291"/>
        <end position="319"/>
    </location>
</feature>
<feature type="region of interest" description="Disordered" evidence="4">
    <location>
        <begin position="367"/>
        <end position="392"/>
    </location>
</feature>
<feature type="compositionally biased region" description="Low complexity" evidence="4">
    <location>
        <begin position="291"/>
        <end position="317"/>
    </location>
</feature>
<comment type="function">
    <text>Hydrolyzes the cell wall of L.lactis and M.lysodeikticus. Required for cell separation during growth.</text>
</comment>
<comment type="catalytic activity">
    <reaction>
        <text>Hydrolysis of (1-&gt;4)-beta-linkages between N-acetylmuramic acid and N-acetyl-D-glucosamine residues in a peptidoglycan and between N-acetyl-D-glucosamine residues in chitodextrins.</text>
        <dbReference type="EC" id="3.2.1.17"/>
    </reaction>
</comment>
<comment type="subcellular location">
    <subcellularLocation>
        <location evidence="1">Secreted</location>
    </subcellularLocation>
</comment>
<comment type="domain">
    <text>The LysM domains are thought to be involved in peptidoglycan binding.</text>
</comment>
<comment type="similarity">
    <text evidence="5">Belongs to the glycosyl hydrolase 73 family.</text>
</comment>
<evidence type="ECO:0000250" key="1"/>
<evidence type="ECO:0000255" key="2"/>
<evidence type="ECO:0000255" key="3">
    <source>
        <dbReference type="PROSITE-ProRule" id="PRU01118"/>
    </source>
</evidence>
<evidence type="ECO:0000256" key="4">
    <source>
        <dbReference type="SAM" id="MobiDB-lite"/>
    </source>
</evidence>
<evidence type="ECO:0000305" key="5"/>
<keyword id="KW-0929">Antimicrobial</keyword>
<keyword id="KW-0081">Bacteriolytic enzyme</keyword>
<keyword id="KW-0131">Cell cycle</keyword>
<keyword id="KW-0132">Cell division</keyword>
<keyword id="KW-0961">Cell wall biogenesis/degradation</keyword>
<keyword id="KW-0326">Glycosidase</keyword>
<keyword id="KW-0378">Hydrolase</keyword>
<keyword id="KW-0677">Repeat</keyword>
<keyword id="KW-0964">Secreted</keyword>
<keyword id="KW-0717">Septation</keyword>
<keyword id="KW-0732">Signal</keyword>
<organism>
    <name type="scientific">Lactococcus lactis subsp. cremoris</name>
    <name type="common">Streptococcus cremoris</name>
    <dbReference type="NCBI Taxonomy" id="1359"/>
    <lineage>
        <taxon>Bacteria</taxon>
        <taxon>Bacillati</taxon>
        <taxon>Bacillota</taxon>
        <taxon>Bacilli</taxon>
        <taxon>Lactobacillales</taxon>
        <taxon>Streptococcaceae</taxon>
        <taxon>Lactococcus</taxon>
    </lineage>
</organism>